<dbReference type="EMBL" id="CP000891">
    <property type="protein sequence ID" value="ABX48254.1"/>
    <property type="molecule type" value="Genomic_DNA"/>
</dbReference>
<dbReference type="RefSeq" id="WP_012196755.1">
    <property type="nucleotide sequence ID" value="NC_009997.1"/>
</dbReference>
<dbReference type="SMR" id="A9L437"/>
<dbReference type="GeneID" id="11771363"/>
<dbReference type="KEGG" id="sbn:Sbal195_1078"/>
<dbReference type="HOGENOM" id="CLU_128074_0_0_6"/>
<dbReference type="Proteomes" id="UP000000770">
    <property type="component" value="Chromosome"/>
</dbReference>
<dbReference type="GO" id="GO:0070987">
    <property type="term" value="P:error-free translesion synthesis"/>
    <property type="evidence" value="ECO:0007669"/>
    <property type="project" value="TreeGrafter"/>
</dbReference>
<dbReference type="Gene3D" id="2.60.40.1470">
    <property type="entry name" value="ApaG domain"/>
    <property type="match status" value="1"/>
</dbReference>
<dbReference type="HAMAP" id="MF_00791">
    <property type="entry name" value="ApaG"/>
    <property type="match status" value="1"/>
</dbReference>
<dbReference type="InterPro" id="IPR007474">
    <property type="entry name" value="ApaG_domain"/>
</dbReference>
<dbReference type="InterPro" id="IPR036767">
    <property type="entry name" value="ApaG_sf"/>
</dbReference>
<dbReference type="InterPro" id="IPR023065">
    <property type="entry name" value="Uncharacterised_ApaG"/>
</dbReference>
<dbReference type="NCBIfam" id="NF003967">
    <property type="entry name" value="PRK05461.1"/>
    <property type="match status" value="1"/>
</dbReference>
<dbReference type="PANTHER" id="PTHR14289">
    <property type="entry name" value="F-BOX ONLY PROTEIN 3"/>
    <property type="match status" value="1"/>
</dbReference>
<dbReference type="PANTHER" id="PTHR14289:SF16">
    <property type="entry name" value="POLYMERASE DELTA-INTERACTING PROTEIN 2"/>
    <property type="match status" value="1"/>
</dbReference>
<dbReference type="Pfam" id="PF04379">
    <property type="entry name" value="DUF525"/>
    <property type="match status" value="1"/>
</dbReference>
<dbReference type="SUPFAM" id="SSF110069">
    <property type="entry name" value="ApaG-like"/>
    <property type="match status" value="1"/>
</dbReference>
<dbReference type="PROSITE" id="PS51087">
    <property type="entry name" value="APAG"/>
    <property type="match status" value="1"/>
</dbReference>
<sequence length="126" mass="13807">MSALDTSIRVEVKTEYIEQQSSPEDEKYLFSYTITIINLGEQAAKLETRHWIITDANGNTSEVQGAGVVGETPTIAPNTAYQYTSGTVLDTPLGIMHGTYGMVSESGEHFQATIRPFRLTTPGLLH</sequence>
<gene>
    <name evidence="1" type="primary">apaG</name>
    <name type="ordered locus">Sbal195_1078</name>
</gene>
<reference key="1">
    <citation type="submission" date="2007-11" db="EMBL/GenBank/DDBJ databases">
        <title>Complete sequence of chromosome of Shewanella baltica OS195.</title>
        <authorList>
            <consortium name="US DOE Joint Genome Institute"/>
            <person name="Copeland A."/>
            <person name="Lucas S."/>
            <person name="Lapidus A."/>
            <person name="Barry K."/>
            <person name="Glavina del Rio T."/>
            <person name="Dalin E."/>
            <person name="Tice H."/>
            <person name="Pitluck S."/>
            <person name="Chain P."/>
            <person name="Malfatti S."/>
            <person name="Shin M."/>
            <person name="Vergez L."/>
            <person name="Schmutz J."/>
            <person name="Larimer F."/>
            <person name="Land M."/>
            <person name="Hauser L."/>
            <person name="Kyrpides N."/>
            <person name="Kim E."/>
            <person name="Brettar I."/>
            <person name="Rodrigues J."/>
            <person name="Konstantinidis K."/>
            <person name="Klappenbach J."/>
            <person name="Hofle M."/>
            <person name="Tiedje J."/>
            <person name="Richardson P."/>
        </authorList>
    </citation>
    <scope>NUCLEOTIDE SEQUENCE [LARGE SCALE GENOMIC DNA]</scope>
    <source>
        <strain>OS195</strain>
    </source>
</reference>
<organism>
    <name type="scientific">Shewanella baltica (strain OS195)</name>
    <dbReference type="NCBI Taxonomy" id="399599"/>
    <lineage>
        <taxon>Bacteria</taxon>
        <taxon>Pseudomonadati</taxon>
        <taxon>Pseudomonadota</taxon>
        <taxon>Gammaproteobacteria</taxon>
        <taxon>Alteromonadales</taxon>
        <taxon>Shewanellaceae</taxon>
        <taxon>Shewanella</taxon>
    </lineage>
</organism>
<feature type="chain" id="PRO_1000083647" description="Protein ApaG">
    <location>
        <begin position="1"/>
        <end position="126"/>
    </location>
</feature>
<feature type="domain" description="ApaG" evidence="1">
    <location>
        <begin position="2"/>
        <end position="126"/>
    </location>
</feature>
<protein>
    <recommendedName>
        <fullName evidence="1">Protein ApaG</fullName>
    </recommendedName>
</protein>
<name>APAG_SHEB9</name>
<evidence type="ECO:0000255" key="1">
    <source>
        <dbReference type="HAMAP-Rule" id="MF_00791"/>
    </source>
</evidence>
<accession>A9L437</accession>
<proteinExistence type="inferred from homology"/>